<keyword id="KW-0002">3D-structure</keyword>
<keyword id="KW-0131">Cell cycle</keyword>
<keyword id="KW-0132">Cell division</keyword>
<keyword id="KW-0159">Chromosome partition</keyword>
<keyword id="KW-0963">Cytoplasm</keyword>
<keyword id="KW-0903">Direct protein sequencing</keyword>
<keyword id="KW-0226">DNA condensation</keyword>
<keyword id="KW-1185">Reference proteome</keyword>
<proteinExistence type="evidence at protein level"/>
<organism>
    <name type="scientific">Escherichia coli (strain K12)</name>
    <dbReference type="NCBI Taxonomy" id="83333"/>
    <lineage>
        <taxon>Bacteria</taxon>
        <taxon>Pseudomonadati</taxon>
        <taxon>Pseudomonadota</taxon>
        <taxon>Gammaproteobacteria</taxon>
        <taxon>Enterobacterales</taxon>
        <taxon>Enterobacteriaceae</taxon>
        <taxon>Escherichia</taxon>
    </lineage>
</organism>
<feature type="chain" id="PRO_0000206792" description="Chromosome partition protein MukE">
    <location>
        <begin position="1"/>
        <end position="234"/>
    </location>
</feature>
<feature type="region of interest" description="Disordered" evidence="1">
    <location>
        <begin position="207"/>
        <end position="234"/>
    </location>
</feature>
<feature type="compositionally biased region" description="Acidic residues" evidence="1">
    <location>
        <begin position="221"/>
        <end position="234"/>
    </location>
</feature>
<feature type="helix" evidence="5">
    <location>
        <begin position="12"/>
        <end position="19"/>
    </location>
</feature>
<feature type="helix" evidence="5">
    <location>
        <begin position="23"/>
        <end position="31"/>
    </location>
</feature>
<feature type="helix" evidence="5">
    <location>
        <begin position="41"/>
        <end position="59"/>
    </location>
</feature>
<feature type="turn" evidence="5">
    <location>
        <begin position="60"/>
        <end position="62"/>
    </location>
</feature>
<feature type="strand" evidence="5">
    <location>
        <begin position="63"/>
        <end position="67"/>
    </location>
</feature>
<feature type="strand" evidence="5">
    <location>
        <begin position="73"/>
        <end position="77"/>
    </location>
</feature>
<feature type="strand" evidence="5">
    <location>
        <begin position="85"/>
        <end position="87"/>
    </location>
</feature>
<feature type="helix" evidence="5">
    <location>
        <begin position="90"/>
        <end position="104"/>
    </location>
</feature>
<feature type="helix" evidence="5">
    <location>
        <begin position="106"/>
        <end position="111"/>
    </location>
</feature>
<feature type="strand" evidence="5">
    <location>
        <begin position="114"/>
        <end position="116"/>
    </location>
</feature>
<feature type="helix" evidence="5">
    <location>
        <begin position="117"/>
        <end position="127"/>
    </location>
</feature>
<feature type="helix" evidence="5">
    <location>
        <begin position="130"/>
        <end position="137"/>
    </location>
</feature>
<feature type="strand" evidence="5">
    <location>
        <begin position="138"/>
        <end position="140"/>
    </location>
</feature>
<feature type="helix" evidence="5">
    <location>
        <begin position="145"/>
        <end position="164"/>
    </location>
</feature>
<feature type="strand" evidence="5">
    <location>
        <begin position="167"/>
        <end position="170"/>
    </location>
</feature>
<feature type="strand" evidence="5">
    <location>
        <begin position="172"/>
        <end position="180"/>
    </location>
</feature>
<feature type="helix" evidence="5">
    <location>
        <begin position="182"/>
        <end position="188"/>
    </location>
</feature>
<feature type="helix" evidence="5">
    <location>
        <begin position="189"/>
        <end position="192"/>
    </location>
</feature>
<feature type="strand" evidence="5">
    <location>
        <begin position="193"/>
        <end position="195"/>
    </location>
</feature>
<feature type="helix" evidence="5">
    <location>
        <begin position="197"/>
        <end position="206"/>
    </location>
</feature>
<feature type="strand" evidence="5">
    <location>
        <begin position="209"/>
        <end position="212"/>
    </location>
</feature>
<dbReference type="EMBL" id="D26440">
    <property type="protein sequence ID" value="BAA05458.1"/>
    <property type="status" value="ALT_INIT"/>
    <property type="molecule type" value="Genomic_DNA"/>
</dbReference>
<dbReference type="EMBL" id="U00096">
    <property type="protein sequence ID" value="AAC74009.2"/>
    <property type="molecule type" value="Genomic_DNA"/>
</dbReference>
<dbReference type="EMBL" id="AP009048">
    <property type="protein sequence ID" value="BAA35669.2"/>
    <property type="status" value="ALT_INIT"/>
    <property type="molecule type" value="Genomic_DNA"/>
</dbReference>
<dbReference type="EMBL" id="X57550">
    <property type="protein sequence ID" value="CAA40775.1"/>
    <property type="status" value="ALT_FRAME"/>
    <property type="molecule type" value="Genomic_DNA"/>
</dbReference>
<dbReference type="PIR" id="B64832">
    <property type="entry name" value="B64832"/>
</dbReference>
<dbReference type="RefSeq" id="NP_415443.2">
    <property type="nucleotide sequence ID" value="NC_000913.3"/>
</dbReference>
<dbReference type="RefSeq" id="WP_001295347.1">
    <property type="nucleotide sequence ID" value="NZ_STEB01000006.1"/>
</dbReference>
<dbReference type="PDB" id="3EUH">
    <property type="method" value="X-ray"/>
    <property type="resolution" value="2.90 A"/>
    <property type="chains" value="C/D/E/F=1-234"/>
</dbReference>
<dbReference type="PDB" id="3RPU">
    <property type="method" value="X-ray"/>
    <property type="resolution" value="3.60 A"/>
    <property type="chains" value="D/E/G/H/Y/Z=10-234"/>
</dbReference>
<dbReference type="PDBsum" id="3EUH"/>
<dbReference type="PDBsum" id="3RPU"/>
<dbReference type="SMR" id="P22524"/>
<dbReference type="BioGRID" id="4261869">
    <property type="interactions" value="83"/>
</dbReference>
<dbReference type="BioGRID" id="849924">
    <property type="interactions" value="2"/>
</dbReference>
<dbReference type="ComplexPortal" id="CPX-1090">
    <property type="entry name" value="MukBEF condensin complex"/>
</dbReference>
<dbReference type="DIP" id="DIP-10274N"/>
<dbReference type="FunCoup" id="P22524">
    <property type="interactions" value="131"/>
</dbReference>
<dbReference type="IntAct" id="P22524">
    <property type="interactions" value="11"/>
</dbReference>
<dbReference type="MINT" id="P22524"/>
<dbReference type="STRING" id="511145.b0923"/>
<dbReference type="jPOST" id="P22524"/>
<dbReference type="PaxDb" id="511145-b0923"/>
<dbReference type="EnsemblBacteria" id="AAC74009">
    <property type="protein sequence ID" value="AAC74009"/>
    <property type="gene ID" value="b0923"/>
</dbReference>
<dbReference type="GeneID" id="75205325"/>
<dbReference type="GeneID" id="945550"/>
<dbReference type="KEGG" id="ecj:JW0906"/>
<dbReference type="KEGG" id="eco:b0923"/>
<dbReference type="KEGG" id="ecoc:C3026_05675"/>
<dbReference type="PATRIC" id="fig|1411691.4.peg.1353"/>
<dbReference type="EchoBASE" id="EB1232"/>
<dbReference type="eggNOG" id="COG3095">
    <property type="taxonomic scope" value="Bacteria"/>
</dbReference>
<dbReference type="HOGENOM" id="CLU_1146408_0_0_6"/>
<dbReference type="InParanoid" id="P22524"/>
<dbReference type="OMA" id="FLMDYQE"/>
<dbReference type="OrthoDB" id="6196648at2"/>
<dbReference type="PhylomeDB" id="P22524"/>
<dbReference type="BioCyc" id="EcoCyc:EG11252-MONOMER"/>
<dbReference type="EvolutionaryTrace" id="P22524"/>
<dbReference type="PRO" id="PR:P22524"/>
<dbReference type="Proteomes" id="UP000000625">
    <property type="component" value="Chromosome"/>
</dbReference>
<dbReference type="GO" id="GO:0000796">
    <property type="term" value="C:condensin complex"/>
    <property type="evidence" value="ECO:0000353"/>
    <property type="project" value="ComplexPortal"/>
</dbReference>
<dbReference type="GO" id="GO:0005737">
    <property type="term" value="C:cytoplasm"/>
    <property type="evidence" value="ECO:0007669"/>
    <property type="project" value="UniProtKB-UniRule"/>
</dbReference>
<dbReference type="GO" id="GO:0009295">
    <property type="term" value="C:nucleoid"/>
    <property type="evidence" value="ECO:0007669"/>
    <property type="project" value="UniProtKB-SubCell"/>
</dbReference>
<dbReference type="GO" id="GO:0051301">
    <property type="term" value="P:cell division"/>
    <property type="evidence" value="ECO:0007669"/>
    <property type="project" value="UniProtKB-KW"/>
</dbReference>
<dbReference type="GO" id="GO:0030261">
    <property type="term" value="P:chromosome condensation"/>
    <property type="evidence" value="ECO:0000303"/>
    <property type="project" value="ComplexPortal"/>
</dbReference>
<dbReference type="GO" id="GO:0007059">
    <property type="term" value="P:chromosome segregation"/>
    <property type="evidence" value="ECO:0007669"/>
    <property type="project" value="UniProtKB-UniRule"/>
</dbReference>
<dbReference type="GO" id="GO:0006260">
    <property type="term" value="P:DNA replication"/>
    <property type="evidence" value="ECO:0007669"/>
    <property type="project" value="UniProtKB-UniRule"/>
</dbReference>
<dbReference type="CDD" id="cd16336">
    <property type="entry name" value="MukE"/>
    <property type="match status" value="1"/>
</dbReference>
<dbReference type="Gene3D" id="1.10.10.2250">
    <property type="match status" value="1"/>
</dbReference>
<dbReference type="Gene3D" id="1.10.10.2260">
    <property type="entry name" value="MukE-like family, C-terminal domain"/>
    <property type="match status" value="1"/>
</dbReference>
<dbReference type="HAMAP" id="MF_01802">
    <property type="entry name" value="MukE"/>
    <property type="match status" value="1"/>
</dbReference>
<dbReference type="InterPro" id="IPR042037">
    <property type="entry name" value="MukE_C"/>
</dbReference>
<dbReference type="InterPro" id="IPR042038">
    <property type="entry name" value="MukE_N"/>
</dbReference>
<dbReference type="InterPro" id="IPR007385">
    <property type="entry name" value="Scp_MukE"/>
</dbReference>
<dbReference type="NCBIfam" id="NF003602">
    <property type="entry name" value="PRK05256.1"/>
    <property type="match status" value="1"/>
</dbReference>
<dbReference type="Pfam" id="PF04288">
    <property type="entry name" value="MukE"/>
    <property type="match status" value="1"/>
</dbReference>
<comment type="function">
    <text evidence="3">Involved in chromosome condensation, segregation and cell cycle progression. May participate in facilitating chromosome segregation by condensation DNA from both sides of a centrally located replisome during cell division. Probably acts via its interaction with MukB and MukF.</text>
</comment>
<comment type="subunit">
    <text evidence="2">Forms a hexameric complex with MukF, (MukF-(MukE)2)2, which forms a ternary complex with MukB. The complex formation is stimulated by calcium or magnesium.</text>
</comment>
<comment type="interaction">
    <interactant intactId="EBI-554672">
        <id>P22524</id>
    </interactant>
    <interactant intactId="EBI-554679">
        <id>P60293</id>
        <label>mukF</label>
    </interactant>
    <organismsDiffer>false</organismsDiffer>
    <experiments>6</experiments>
</comment>
<comment type="subcellular location">
    <subcellularLocation>
        <location>Cytoplasm</location>
        <location>Nucleoid</location>
    </subcellularLocation>
    <text>Restricted to the nucleoid region.</text>
</comment>
<comment type="similarity">
    <text evidence="4">Belongs to the MukE family.</text>
</comment>
<comment type="sequence caution" evidence="4">
    <conflict type="erroneous initiation">
        <sequence resource="EMBL-CDS" id="BAA05458"/>
    </conflict>
    <text>Truncated N-terminus.</text>
</comment>
<comment type="sequence caution" evidence="4">
    <conflict type="erroneous initiation">
        <sequence resource="EMBL-CDS" id="BAA35669"/>
    </conflict>
    <text>Truncated N-terminus.</text>
</comment>
<comment type="sequence caution" evidence="4">
    <conflict type="frameshift">
        <sequence resource="EMBL-CDS" id="CAA40775"/>
    </conflict>
</comment>
<evidence type="ECO:0000256" key="1">
    <source>
        <dbReference type="SAM" id="MobiDB-lite"/>
    </source>
</evidence>
<evidence type="ECO:0000269" key="2">
    <source>
    </source>
</evidence>
<evidence type="ECO:0000269" key="3">
    <source>
    </source>
</evidence>
<evidence type="ECO:0000305" key="4"/>
<evidence type="ECO:0007829" key="5">
    <source>
        <dbReference type="PDB" id="3EUH"/>
    </source>
</evidence>
<accession>P22524</accession>
<gene>
    <name type="primary">mukE</name>
    <name type="synonym">kicA</name>
    <name type="synonym">ycbA</name>
    <name type="ordered locus">b0923</name>
    <name type="ordered locus">JW0906</name>
</gene>
<protein>
    <recommendedName>
        <fullName>Chromosome partition protein MukE</fullName>
    </recommendedName>
    <alternativeName>
        <fullName>Protein KicA</fullName>
    </alternativeName>
</protein>
<sequence length="234" mass="26974">MSSTNIEQVMPVKLAQALANPLFPALDSALRSGRHIGLDELDNHAFLMDFQEYLEEFYARYNVELIRAPEGFFYLRPRSTTLIPRSVLSELDMMVGKILCYLYLSPERLANEGIFTQQELYDELLTLADEAKLLKLVNNRSTGSDVDRQKLQEKVRSSLNRLRRLGMVWFMGHDSSKFRITESVFRFGADVRAGDDPREAQRRLIRDGEAMPIENHLQLNDETEENQPDSGEEE</sequence>
<reference key="1">
    <citation type="journal article" date="1994" name="Mol. Gen. Genet.">
        <title>New killing system controlled by two genes located immediately upstream of the mukB gene in Escherichia coli.</title>
        <authorList>
            <person name="Feng J."/>
            <person name="Yamanaka K."/>
            <person name="Niki H."/>
            <person name="Ogura T."/>
            <person name="Hiraga S."/>
        </authorList>
    </citation>
    <scope>NUCLEOTIDE SEQUENCE [GENOMIC DNA]</scope>
    <source>
        <strain>K12 / W3110 / ATCC 27325 / DSM 5911</strain>
    </source>
</reference>
<reference key="2">
    <citation type="journal article" date="1996" name="DNA Res.">
        <title>A 718-kb DNA sequence of the Escherichia coli K-12 genome corresponding to the 12.7-28.0 min region on the linkage map.</title>
        <authorList>
            <person name="Oshima T."/>
            <person name="Aiba H."/>
            <person name="Baba T."/>
            <person name="Fujita K."/>
            <person name="Hayashi K."/>
            <person name="Honjo A."/>
            <person name="Ikemoto K."/>
            <person name="Inada T."/>
            <person name="Itoh T."/>
            <person name="Kajihara M."/>
            <person name="Kanai K."/>
            <person name="Kashimoto K."/>
            <person name="Kimura S."/>
            <person name="Kitagawa M."/>
            <person name="Makino K."/>
            <person name="Masuda S."/>
            <person name="Miki T."/>
            <person name="Mizobuchi K."/>
            <person name="Mori H."/>
            <person name="Motomura K."/>
            <person name="Nakamura Y."/>
            <person name="Nashimoto H."/>
            <person name="Nishio Y."/>
            <person name="Saito N."/>
            <person name="Sampei G."/>
            <person name="Seki Y."/>
            <person name="Tagami H."/>
            <person name="Takemoto K."/>
            <person name="Wada C."/>
            <person name="Yamamoto Y."/>
            <person name="Yano M."/>
            <person name="Horiuchi T."/>
        </authorList>
    </citation>
    <scope>NUCLEOTIDE SEQUENCE [LARGE SCALE GENOMIC DNA]</scope>
    <source>
        <strain>K12 / W3110 / ATCC 27325 / DSM 5911</strain>
    </source>
</reference>
<reference key="3">
    <citation type="journal article" date="1997" name="Science">
        <title>The complete genome sequence of Escherichia coli K-12.</title>
        <authorList>
            <person name="Blattner F.R."/>
            <person name="Plunkett G. III"/>
            <person name="Bloch C.A."/>
            <person name="Perna N.T."/>
            <person name="Burland V."/>
            <person name="Riley M."/>
            <person name="Collado-Vides J."/>
            <person name="Glasner J.D."/>
            <person name="Rode C.K."/>
            <person name="Mayhew G.F."/>
            <person name="Gregor J."/>
            <person name="Davis N.W."/>
            <person name="Kirkpatrick H.A."/>
            <person name="Goeden M.A."/>
            <person name="Rose D.J."/>
            <person name="Mau B."/>
            <person name="Shao Y."/>
        </authorList>
    </citation>
    <scope>NUCLEOTIDE SEQUENCE [LARGE SCALE GENOMIC DNA]</scope>
    <source>
        <strain>K12 / MG1655 / ATCC 47076</strain>
    </source>
</reference>
<reference key="4">
    <citation type="journal article" date="2006" name="Mol. Syst. Biol.">
        <title>Highly accurate genome sequences of Escherichia coli K-12 strains MG1655 and W3110.</title>
        <authorList>
            <person name="Hayashi K."/>
            <person name="Morooka N."/>
            <person name="Yamamoto Y."/>
            <person name="Fujita K."/>
            <person name="Isono K."/>
            <person name="Choi S."/>
            <person name="Ohtsubo E."/>
            <person name="Baba T."/>
            <person name="Wanner B.L."/>
            <person name="Mori H."/>
            <person name="Horiuchi T."/>
        </authorList>
    </citation>
    <scope>NUCLEOTIDE SEQUENCE [LARGE SCALE GENOMIC DNA]</scope>
    <source>
        <strain>K12 / W3110 / ATCC 27325 / DSM 5911</strain>
    </source>
</reference>
<reference key="5">
    <citation type="journal article" date="2010" name="Proc. Natl. Acad. Sci. U.S.A.">
        <title>Escherichia coli condensin MukB stimulates topoisomerase IV activity by a direct physical interaction.</title>
        <authorList>
            <person name="Li Y."/>
            <person name="Stewart N.K."/>
            <person name="Berger A.J."/>
            <person name="Vos S."/>
            <person name="Schoeffler A.J."/>
            <person name="Berger J.M."/>
            <person name="Chait B.T."/>
            <person name="Oakley M.G."/>
        </authorList>
    </citation>
    <scope>PROTEIN SEQUENCE OF 14-31; 68-78 AND 109-132</scope>
    <scope>INTERACTION WITH MUKB</scope>
</reference>
<reference key="6">
    <citation type="journal article" date="1991" name="EMBO J.">
        <title>The new gene mukB codes for a 177 kd protein with coiled-coil domains involved in chromosome partitioning of E. coli.</title>
        <authorList>
            <person name="Niki H."/>
            <person name="Jaffe A."/>
            <person name="Imamura R."/>
            <person name="Ogura T."/>
            <person name="Hiraga S."/>
        </authorList>
    </citation>
    <scope>NUCLEOTIDE SEQUENCE [GENOMIC DNA] OF 83-234</scope>
</reference>
<reference key="7">
    <citation type="journal article" date="1996" name="Mol. Gen. Genet.">
        <title>Identification of two new genes, mukE and mukF, involved in chromosome partitioning in Escherichia coli.</title>
        <authorList>
            <person name="Yamanaka K."/>
            <person name="Ogura T."/>
            <person name="Niki H."/>
            <person name="Hiraga S."/>
        </authorList>
    </citation>
    <scope>FUNCTION</scope>
</reference>
<reference key="8">
    <citation type="journal article" date="1999" name="EMBO J.">
        <title>Complex formation of MukB, MukE and MukF proteins involved in chromosome partitioning in Escherichia coli.</title>
        <authorList>
            <person name="Yamazoe M."/>
            <person name="Onogi T."/>
            <person name="Sunako Y."/>
            <person name="Niki H."/>
            <person name="Yamanaka K."/>
            <person name="Ichimura T."/>
            <person name="Hiraga S."/>
        </authorList>
    </citation>
    <scope>CHARACTERIZATION</scope>
    <scope>INTERACTION WITH MUKB AND MUKF</scope>
</reference>
<reference key="9">
    <citation type="journal article" date="2009" name="Cell">
        <title>Structural studies of a bacterial condensin complex reveal ATP-dependent disruption of intersubunit interactions.</title>
        <authorList>
            <person name="Woo J.-S."/>
            <person name="Lim J.-H."/>
            <person name="Shin H.-C."/>
            <person name="Suh M.-K."/>
            <person name="Ku B."/>
            <person name="Lee K.-H."/>
            <person name="Joo K."/>
            <person name="Robinson H."/>
            <person name="Lee J."/>
            <person name="Park S.-Y."/>
            <person name="Ha N.-C."/>
            <person name="Oh B.-H."/>
        </authorList>
    </citation>
    <scope>X-RAY CRYSTALLOGRAPHY (2.9 ANGSTROMS)</scope>
    <scope>SUBUNIT</scope>
</reference>
<name>MUKE_ECOLI</name>